<protein>
    <recommendedName>
        <fullName evidence="1">Ribulokinase</fullName>
        <ecNumber evidence="1">2.7.1.16</ecNumber>
    </recommendedName>
</protein>
<evidence type="ECO:0000255" key="1">
    <source>
        <dbReference type="HAMAP-Rule" id="MF_00520"/>
    </source>
</evidence>
<accession>C4ZPY6</accession>
<reference key="1">
    <citation type="journal article" date="2009" name="J. Bacteriol.">
        <title>Genomic sequencing reveals regulatory mutations and recombinational events in the widely used MC4100 lineage of Escherichia coli K-12.</title>
        <authorList>
            <person name="Ferenci T."/>
            <person name="Zhou Z."/>
            <person name="Betteridge T."/>
            <person name="Ren Y."/>
            <person name="Liu Y."/>
            <person name="Feng L."/>
            <person name="Reeves P.R."/>
            <person name="Wang L."/>
        </authorList>
    </citation>
    <scope>NUCLEOTIDE SEQUENCE [LARGE SCALE GENOMIC DNA]</scope>
    <source>
        <strain>K12 / MC4100 / BW2952</strain>
    </source>
</reference>
<name>ARAB_ECOBW</name>
<organism>
    <name type="scientific">Escherichia coli (strain K12 / MC4100 / BW2952)</name>
    <dbReference type="NCBI Taxonomy" id="595496"/>
    <lineage>
        <taxon>Bacteria</taxon>
        <taxon>Pseudomonadati</taxon>
        <taxon>Pseudomonadota</taxon>
        <taxon>Gammaproteobacteria</taxon>
        <taxon>Enterobacterales</taxon>
        <taxon>Enterobacteriaceae</taxon>
        <taxon>Escherichia</taxon>
    </lineage>
</organism>
<comment type="catalytic activity">
    <reaction evidence="1">
        <text>D-ribulose + ATP = D-ribulose 5-phosphate + ADP + H(+)</text>
        <dbReference type="Rhea" id="RHEA:17601"/>
        <dbReference type="ChEBI" id="CHEBI:15378"/>
        <dbReference type="ChEBI" id="CHEBI:17173"/>
        <dbReference type="ChEBI" id="CHEBI:30616"/>
        <dbReference type="ChEBI" id="CHEBI:58121"/>
        <dbReference type="ChEBI" id="CHEBI:456216"/>
        <dbReference type="EC" id="2.7.1.16"/>
    </reaction>
</comment>
<comment type="catalytic activity">
    <reaction evidence="1">
        <text>L-ribulose + ATP = L-ribulose 5-phosphate + ADP + H(+)</text>
        <dbReference type="Rhea" id="RHEA:22072"/>
        <dbReference type="ChEBI" id="CHEBI:15378"/>
        <dbReference type="ChEBI" id="CHEBI:16880"/>
        <dbReference type="ChEBI" id="CHEBI:30616"/>
        <dbReference type="ChEBI" id="CHEBI:58226"/>
        <dbReference type="ChEBI" id="CHEBI:456216"/>
        <dbReference type="EC" id="2.7.1.16"/>
    </reaction>
</comment>
<comment type="pathway">
    <text evidence="1">Carbohydrate degradation; L-arabinose degradation via L-ribulose; D-xylulose 5-phosphate from L-arabinose (bacterial route): step 2/3.</text>
</comment>
<comment type="similarity">
    <text evidence="1">Belongs to the ribulokinase family.</text>
</comment>
<proteinExistence type="inferred from homology"/>
<sequence length="566" mass="61157">MAIAIGLDFGSDSVRALAVDCASGEEIATSVEWYPRWQKGQFCDAPNNQFRHHPRDYIESMEAALKTVLAELSVEQRAAVVGIGVDSTGSTPAPIDADGNVLALRPEFAENPNAMFVLWKDHTAVERSEEITRLCHAPGNVDYSRYIGGIYSSEWFWAKILHVTRQDSAVAQSAASWIELCDWVPALLSGTTRPQDIRRGRCSAGHKSLWHESWGGLPPASFFDELDPILNRHLPSPLFTDTWTADIPVGTLCPEWAQRLGLPESVVISGGAFDCHMGAVGAGAQPNALVKVIGTSTCDILIADKQSVGERAVKGICGQVDGSVVPGFIGLEAGQSAFGDIYAWFGRVLSWPLEQLAAQHPELKAQINASQKQLLPALTEAWAKNPSLDHLPVVLDWFNGRRSPNANQRLKGVITDLNLATDAPLLFGGLIAATAFGARAIMECFTDQGIAVNNVMALGGIARKNQVIMQACCDVLNRPLQIVASDQCCALGAAIFAAVAAKVHADIPSAQQKMASAVEKTLQPRSEQAQRFEQLYRRYQQWAMSAEQHYLPTSAPAQAAQAVATL</sequence>
<feature type="chain" id="PRO_1000211744" description="Ribulokinase">
    <location>
        <begin position="1"/>
        <end position="566"/>
    </location>
</feature>
<dbReference type="EC" id="2.7.1.16" evidence="1"/>
<dbReference type="EMBL" id="CP001396">
    <property type="protein sequence ID" value="ACR63676.1"/>
    <property type="molecule type" value="Genomic_DNA"/>
</dbReference>
<dbReference type="RefSeq" id="WP_000951785.1">
    <property type="nucleotide sequence ID" value="NC_012759.1"/>
</dbReference>
<dbReference type="SMR" id="C4ZPY6"/>
<dbReference type="KEGG" id="ebw:BWG_0059"/>
<dbReference type="HOGENOM" id="CLU_009281_9_1_6"/>
<dbReference type="UniPathway" id="UPA00145">
    <property type="reaction ID" value="UER00566"/>
</dbReference>
<dbReference type="GO" id="GO:0005737">
    <property type="term" value="C:cytoplasm"/>
    <property type="evidence" value="ECO:0007669"/>
    <property type="project" value="TreeGrafter"/>
</dbReference>
<dbReference type="GO" id="GO:0005524">
    <property type="term" value="F:ATP binding"/>
    <property type="evidence" value="ECO:0007669"/>
    <property type="project" value="UniProtKB-KW"/>
</dbReference>
<dbReference type="GO" id="GO:0019150">
    <property type="term" value="F:D-ribulokinase activity"/>
    <property type="evidence" value="ECO:0007669"/>
    <property type="project" value="RHEA"/>
</dbReference>
<dbReference type="GO" id="GO:0008741">
    <property type="term" value="F:ribulokinase activity"/>
    <property type="evidence" value="ECO:0007669"/>
    <property type="project" value="UniProtKB-UniRule"/>
</dbReference>
<dbReference type="GO" id="GO:0019569">
    <property type="term" value="P:L-arabinose catabolic process to xylulose 5-phosphate"/>
    <property type="evidence" value="ECO:0007669"/>
    <property type="project" value="UniProtKB-UniRule"/>
</dbReference>
<dbReference type="CDD" id="cd07781">
    <property type="entry name" value="ASKHA_NBD_FGGY_L-RBK"/>
    <property type="match status" value="1"/>
</dbReference>
<dbReference type="Gene3D" id="1.20.58.2240">
    <property type="match status" value="1"/>
</dbReference>
<dbReference type="Gene3D" id="3.30.420.40">
    <property type="match status" value="1"/>
</dbReference>
<dbReference type="HAMAP" id="MF_00520">
    <property type="entry name" value="Ribulokinase"/>
    <property type="match status" value="1"/>
</dbReference>
<dbReference type="InterPro" id="IPR043129">
    <property type="entry name" value="ATPase_NBD"/>
</dbReference>
<dbReference type="InterPro" id="IPR018485">
    <property type="entry name" value="FGGY_C"/>
</dbReference>
<dbReference type="InterPro" id="IPR005929">
    <property type="entry name" value="Ribulokinase"/>
</dbReference>
<dbReference type="NCBIfam" id="TIGR01234">
    <property type="entry name" value="L-ribulokinase"/>
    <property type="match status" value="1"/>
</dbReference>
<dbReference type="NCBIfam" id="NF003154">
    <property type="entry name" value="PRK04123.1"/>
    <property type="match status" value="1"/>
</dbReference>
<dbReference type="PANTHER" id="PTHR43435:SF4">
    <property type="entry name" value="FGGY CARBOHYDRATE KINASE DOMAIN-CONTAINING PROTEIN"/>
    <property type="match status" value="1"/>
</dbReference>
<dbReference type="PANTHER" id="PTHR43435">
    <property type="entry name" value="RIBULOKINASE"/>
    <property type="match status" value="1"/>
</dbReference>
<dbReference type="Pfam" id="PF02782">
    <property type="entry name" value="FGGY_C"/>
    <property type="match status" value="1"/>
</dbReference>
<dbReference type="SUPFAM" id="SSF53067">
    <property type="entry name" value="Actin-like ATPase domain"/>
    <property type="match status" value="2"/>
</dbReference>
<gene>
    <name evidence="1" type="primary">araB</name>
    <name type="ordered locus">BWG_0059</name>
</gene>
<keyword id="KW-0054">Arabinose catabolism</keyword>
<keyword id="KW-0067">ATP-binding</keyword>
<keyword id="KW-0119">Carbohydrate metabolism</keyword>
<keyword id="KW-0418">Kinase</keyword>
<keyword id="KW-0547">Nucleotide-binding</keyword>
<keyword id="KW-0808">Transferase</keyword>